<proteinExistence type="inferred from homology"/>
<organism>
    <name type="scientific">Prochlorococcus marinus (strain NATL2A)</name>
    <dbReference type="NCBI Taxonomy" id="59920"/>
    <lineage>
        <taxon>Bacteria</taxon>
        <taxon>Bacillati</taxon>
        <taxon>Cyanobacteriota</taxon>
        <taxon>Cyanophyceae</taxon>
        <taxon>Synechococcales</taxon>
        <taxon>Prochlorococcaceae</taxon>
        <taxon>Prochlorococcus</taxon>
    </lineage>
</organism>
<feature type="chain" id="PRO_0000241386" description="Large ribosomal subunit protein uL3">
    <location>
        <begin position="1"/>
        <end position="218"/>
    </location>
</feature>
<feature type="region of interest" description="Disordered" evidence="2">
    <location>
        <begin position="128"/>
        <end position="167"/>
    </location>
</feature>
<feature type="region of interest" description="Disordered" evidence="2">
    <location>
        <begin position="199"/>
        <end position="218"/>
    </location>
</feature>
<sequence>MSLGILGKKLGMSQLFDDQGRAVPVTLIEAGPCRITQLKSADTDGYAAVQIGFQLIREKLINKPSKGHLAKSGNDLLRHLREYRVENSSEFELGASITVDDFEKGQKVDISGDTMGRGFAGYQKRHGFSRGPMSHGSKNHRLPGSIGAGTTPGRVYPGKRMAGRMGGKKVTTRALEILKIDTNHNLLVVKGSVPGKPGSLLNIRPAKRVGAPTQQGGK</sequence>
<evidence type="ECO:0000255" key="1">
    <source>
        <dbReference type="HAMAP-Rule" id="MF_01325"/>
    </source>
</evidence>
<evidence type="ECO:0000256" key="2">
    <source>
        <dbReference type="SAM" id="MobiDB-lite"/>
    </source>
</evidence>
<evidence type="ECO:0000305" key="3"/>
<reference key="1">
    <citation type="journal article" date="2007" name="PLoS Genet.">
        <title>Patterns and implications of gene gain and loss in the evolution of Prochlorococcus.</title>
        <authorList>
            <person name="Kettler G.C."/>
            <person name="Martiny A.C."/>
            <person name="Huang K."/>
            <person name="Zucker J."/>
            <person name="Coleman M.L."/>
            <person name="Rodrigue S."/>
            <person name="Chen F."/>
            <person name="Lapidus A."/>
            <person name="Ferriera S."/>
            <person name="Johnson J."/>
            <person name="Steglich C."/>
            <person name="Church G.M."/>
            <person name="Richardson P."/>
            <person name="Chisholm S.W."/>
        </authorList>
    </citation>
    <scope>NUCLEOTIDE SEQUENCE [LARGE SCALE GENOMIC DNA]</scope>
    <source>
        <strain>NATL2A</strain>
    </source>
</reference>
<gene>
    <name evidence="1" type="primary">rplC</name>
    <name evidence="1" type="synonym">rpl3</name>
    <name type="ordered locus">PMN2A_1129</name>
</gene>
<protein>
    <recommendedName>
        <fullName evidence="1">Large ribosomal subunit protein uL3</fullName>
    </recommendedName>
    <alternativeName>
        <fullName evidence="3">50S ribosomal protein L3</fullName>
    </alternativeName>
</protein>
<dbReference type="EMBL" id="CP000095">
    <property type="protein sequence ID" value="AAZ58619.1"/>
    <property type="molecule type" value="Genomic_DNA"/>
</dbReference>
<dbReference type="RefSeq" id="WP_011295473.1">
    <property type="nucleotide sequence ID" value="NC_007335.2"/>
</dbReference>
<dbReference type="SMR" id="Q46IQ9"/>
<dbReference type="STRING" id="59920.PMN2A_1129"/>
<dbReference type="KEGG" id="pmn:PMN2A_1129"/>
<dbReference type="HOGENOM" id="CLU_044142_4_1_3"/>
<dbReference type="OrthoDB" id="9806135at2"/>
<dbReference type="PhylomeDB" id="Q46IQ9"/>
<dbReference type="Proteomes" id="UP000002535">
    <property type="component" value="Chromosome"/>
</dbReference>
<dbReference type="GO" id="GO:0022625">
    <property type="term" value="C:cytosolic large ribosomal subunit"/>
    <property type="evidence" value="ECO:0007669"/>
    <property type="project" value="TreeGrafter"/>
</dbReference>
<dbReference type="GO" id="GO:0019843">
    <property type="term" value="F:rRNA binding"/>
    <property type="evidence" value="ECO:0007669"/>
    <property type="project" value="UniProtKB-UniRule"/>
</dbReference>
<dbReference type="GO" id="GO:0003735">
    <property type="term" value="F:structural constituent of ribosome"/>
    <property type="evidence" value="ECO:0007669"/>
    <property type="project" value="InterPro"/>
</dbReference>
<dbReference type="GO" id="GO:0006412">
    <property type="term" value="P:translation"/>
    <property type="evidence" value="ECO:0007669"/>
    <property type="project" value="UniProtKB-UniRule"/>
</dbReference>
<dbReference type="FunFam" id="3.30.160.810:FF:000001">
    <property type="entry name" value="50S ribosomal protein L3"/>
    <property type="match status" value="1"/>
</dbReference>
<dbReference type="FunFam" id="2.40.30.10:FF:000065">
    <property type="entry name" value="50S ribosomal protein L3, chloroplastic"/>
    <property type="match status" value="1"/>
</dbReference>
<dbReference type="Gene3D" id="3.30.160.810">
    <property type="match status" value="1"/>
</dbReference>
<dbReference type="Gene3D" id="2.40.30.10">
    <property type="entry name" value="Translation factors"/>
    <property type="match status" value="1"/>
</dbReference>
<dbReference type="HAMAP" id="MF_01325_B">
    <property type="entry name" value="Ribosomal_uL3_B"/>
    <property type="match status" value="1"/>
</dbReference>
<dbReference type="InterPro" id="IPR000597">
    <property type="entry name" value="Ribosomal_uL3"/>
</dbReference>
<dbReference type="InterPro" id="IPR019927">
    <property type="entry name" value="Ribosomal_uL3_bac/org-type"/>
</dbReference>
<dbReference type="InterPro" id="IPR019926">
    <property type="entry name" value="Ribosomal_uL3_CS"/>
</dbReference>
<dbReference type="InterPro" id="IPR009000">
    <property type="entry name" value="Transl_B-barrel_sf"/>
</dbReference>
<dbReference type="NCBIfam" id="TIGR03625">
    <property type="entry name" value="L3_bact"/>
    <property type="match status" value="1"/>
</dbReference>
<dbReference type="PANTHER" id="PTHR11229">
    <property type="entry name" value="50S RIBOSOMAL PROTEIN L3"/>
    <property type="match status" value="1"/>
</dbReference>
<dbReference type="PANTHER" id="PTHR11229:SF16">
    <property type="entry name" value="LARGE RIBOSOMAL SUBUNIT PROTEIN UL3C"/>
    <property type="match status" value="1"/>
</dbReference>
<dbReference type="Pfam" id="PF00297">
    <property type="entry name" value="Ribosomal_L3"/>
    <property type="match status" value="1"/>
</dbReference>
<dbReference type="SUPFAM" id="SSF50447">
    <property type="entry name" value="Translation proteins"/>
    <property type="match status" value="1"/>
</dbReference>
<dbReference type="PROSITE" id="PS00474">
    <property type="entry name" value="RIBOSOMAL_L3"/>
    <property type="match status" value="1"/>
</dbReference>
<accession>Q46IQ9</accession>
<keyword id="KW-1185">Reference proteome</keyword>
<keyword id="KW-0687">Ribonucleoprotein</keyword>
<keyword id="KW-0689">Ribosomal protein</keyword>
<keyword id="KW-0694">RNA-binding</keyword>
<keyword id="KW-0699">rRNA-binding</keyword>
<name>RL3_PROMT</name>
<comment type="function">
    <text evidence="1">One of the primary rRNA binding proteins, it binds directly near the 3'-end of the 23S rRNA, where it nucleates assembly of the 50S subunit.</text>
</comment>
<comment type="subunit">
    <text evidence="1">Part of the 50S ribosomal subunit. Forms a cluster with proteins L14 and L19.</text>
</comment>
<comment type="similarity">
    <text evidence="1">Belongs to the universal ribosomal protein uL3 family.</text>
</comment>